<gene>
    <name evidence="4" type="primary">SOK4</name>
    <name evidence="7" type="ORF">PHYPA_022993</name>
    <name evidence="6" type="ORF">PHYPADRAFT_160198</name>
</gene>
<keyword id="KW-0131">Cell cycle</keyword>
<keyword id="KW-0132">Cell division</keyword>
<keyword id="KW-1003">Cell membrane</keyword>
<keyword id="KW-0217">Developmental protein</keyword>
<keyword id="KW-0472">Membrane</keyword>
<keyword id="KW-1185">Reference proteome</keyword>
<name>SOK4_PHYPA</name>
<comment type="function">
    <text evidence="1">SOSEKI proteins locally interpret global polarity cues and can influence cell division orientation to coordinate cell polarization relative to body axes.</text>
</comment>
<comment type="subunit">
    <text evidence="1 3">Homodimer (By similarity). Forms long polymer filaments with other SOKs proteins polymers crucial for polar localization and biological activity (PubMed:32004461).</text>
</comment>
<comment type="subcellular location">
    <subcellularLocation>
        <location evidence="1">Cell membrane</location>
        <topology evidence="1">Peripheral membrane protein</topology>
        <orientation evidence="1">Cytoplasmic side</orientation>
    </subcellularLocation>
</comment>
<comment type="domain">
    <text evidence="1">The DIX-like oligomerization domain is required for polymerization, edge localization and biological activity.</text>
</comment>
<comment type="miscellaneous">
    <text evidence="5">'Soseki' means cornerstone in Japanese.</text>
</comment>
<comment type="similarity">
    <text evidence="5">Belongs to the SOSEKI family.</text>
</comment>
<feature type="chain" id="PRO_0000452148" description="Protein SOSEKI 4">
    <location>
        <begin position="1"/>
        <end position="390"/>
    </location>
</feature>
<feature type="region of interest" description="DIX-like oligomerization domain" evidence="1">
    <location>
        <begin position="22"/>
        <end position="115"/>
    </location>
</feature>
<feature type="region of interest" description="Disordered" evidence="2">
    <location>
        <begin position="210"/>
        <end position="247"/>
    </location>
</feature>
<feature type="region of interest" description="Disordered" evidence="2">
    <location>
        <begin position="291"/>
        <end position="321"/>
    </location>
</feature>
<feature type="compositionally biased region" description="Polar residues" evidence="2">
    <location>
        <begin position="304"/>
        <end position="321"/>
    </location>
</feature>
<reference key="1">
    <citation type="journal article" date="2008" name="Science">
        <title>The Physcomitrella genome reveals evolutionary insights into the conquest of land by plants.</title>
        <authorList>
            <person name="Rensing S.A."/>
            <person name="Lang D."/>
            <person name="Zimmer A.D."/>
            <person name="Terry A."/>
            <person name="Salamov A."/>
            <person name="Shapiro H."/>
            <person name="Nishiyama T."/>
            <person name="Perroud P.-F."/>
            <person name="Lindquist E.A."/>
            <person name="Kamisugi Y."/>
            <person name="Tanahashi T."/>
            <person name="Sakakibara K."/>
            <person name="Fujita T."/>
            <person name="Oishi K."/>
            <person name="Shin-I T."/>
            <person name="Kuroki Y."/>
            <person name="Toyoda A."/>
            <person name="Suzuki Y."/>
            <person name="Hashimoto S.-I."/>
            <person name="Yamaguchi K."/>
            <person name="Sugano S."/>
            <person name="Kohara Y."/>
            <person name="Fujiyama A."/>
            <person name="Anterola A."/>
            <person name="Aoki S."/>
            <person name="Ashton N."/>
            <person name="Barbazuk W.B."/>
            <person name="Barker E."/>
            <person name="Bennetzen J.L."/>
            <person name="Blankenship R."/>
            <person name="Cho S.H."/>
            <person name="Dutcher S.K."/>
            <person name="Estelle M."/>
            <person name="Fawcett J.A."/>
            <person name="Gundlach H."/>
            <person name="Hanada K."/>
            <person name="Heyl A."/>
            <person name="Hicks K.A."/>
            <person name="Hughes J."/>
            <person name="Lohr M."/>
            <person name="Mayer K."/>
            <person name="Melkozernov A."/>
            <person name="Murata T."/>
            <person name="Nelson D.R."/>
            <person name="Pils B."/>
            <person name="Prigge M."/>
            <person name="Reiss B."/>
            <person name="Renner T."/>
            <person name="Rombauts S."/>
            <person name="Rushton P.J."/>
            <person name="Sanderfoot A."/>
            <person name="Schween G."/>
            <person name="Shiu S.-H."/>
            <person name="Stueber K."/>
            <person name="Theodoulou F.L."/>
            <person name="Tu H."/>
            <person name="Van de Peer Y."/>
            <person name="Verrier P.J."/>
            <person name="Waters E."/>
            <person name="Wood A."/>
            <person name="Yang L."/>
            <person name="Cove D."/>
            <person name="Cuming A.C."/>
            <person name="Hasebe M."/>
            <person name="Lucas S."/>
            <person name="Mishler B.D."/>
            <person name="Reski R."/>
            <person name="Grigoriev I.V."/>
            <person name="Quatrano R.S."/>
            <person name="Boore J.L."/>
        </authorList>
    </citation>
    <scope>NUCLEOTIDE SEQUENCE [LARGE SCALE GENOMIC DNA]</scope>
    <source>
        <strain>cv. Gransden 2004</strain>
    </source>
</reference>
<reference key="2">
    <citation type="journal article" date="2018" name="Plant J.">
        <title>The Physcomitrella patens chromosome-scale assembly reveals moss genome structure and evolution.</title>
        <authorList>
            <person name="Lang D."/>
            <person name="Ullrich K.K."/>
            <person name="Murat F."/>
            <person name="Fuchs J."/>
            <person name="Jenkins J."/>
            <person name="Haas F.B."/>
            <person name="Piednoel M."/>
            <person name="Gundlach H."/>
            <person name="Van Bel M."/>
            <person name="Meyberg R."/>
            <person name="Vives C."/>
            <person name="Morata J."/>
            <person name="Symeonidi A."/>
            <person name="Hiss M."/>
            <person name="Muchero W."/>
            <person name="Kamisugi Y."/>
            <person name="Saleh O."/>
            <person name="Blanc G."/>
            <person name="Decker E.L."/>
            <person name="van Gessel N."/>
            <person name="Grimwood J."/>
            <person name="Hayes R.D."/>
            <person name="Graham S.W."/>
            <person name="Gunter L.E."/>
            <person name="McDaniel S.F."/>
            <person name="Hoernstein S.N.W."/>
            <person name="Larsson A."/>
            <person name="Li F.W."/>
            <person name="Perroud P.F."/>
            <person name="Phillips J."/>
            <person name="Ranjan P."/>
            <person name="Rokshar D.S."/>
            <person name="Rothfels C.J."/>
            <person name="Schneider L."/>
            <person name="Shu S."/>
            <person name="Stevenson D.W."/>
            <person name="Thummler F."/>
            <person name="Tillich M."/>
            <person name="Villarreal Aguilar J.C."/>
            <person name="Widiez T."/>
            <person name="Wong G.K."/>
            <person name="Wymore A."/>
            <person name="Zhang Y."/>
            <person name="Zimmer A.D."/>
            <person name="Quatrano R.S."/>
            <person name="Mayer K.F.X."/>
            <person name="Goodstein D."/>
            <person name="Casacuberta J.M."/>
            <person name="Vandepoele K."/>
            <person name="Reski R."/>
            <person name="Cuming A.C."/>
            <person name="Tuskan G.A."/>
            <person name="Maumus F."/>
            <person name="Salse J."/>
            <person name="Schmutz J."/>
            <person name="Rensing S.A."/>
        </authorList>
    </citation>
    <scope>GENOME REANNOTATION</scope>
    <source>
        <strain>cv. Gransden 2004</strain>
    </source>
</reference>
<reference key="3">
    <citation type="journal article" date="2020" name="Cell">
        <title>DIX domain polymerization drives assembly of plant cell polarity complexes.</title>
        <authorList>
            <person name="van Dop M."/>
            <person name="Fiedler M."/>
            <person name="Mutte S."/>
            <person name="de Keijzer J."/>
            <person name="Olijslager L."/>
            <person name="Albrecht C."/>
            <person name="Liao C.Y."/>
            <person name="Janson M.E."/>
            <person name="Bienz M."/>
            <person name="Weijers D."/>
        </authorList>
    </citation>
    <scope>SUBUNIT</scope>
    <scope>GENE FAMILY</scope>
</reference>
<evidence type="ECO:0000250" key="1">
    <source>
        <dbReference type="UniProtKB" id="Q9SYJ8"/>
    </source>
</evidence>
<evidence type="ECO:0000256" key="2">
    <source>
        <dbReference type="SAM" id="MobiDB-lite"/>
    </source>
</evidence>
<evidence type="ECO:0000269" key="3">
    <source>
    </source>
</evidence>
<evidence type="ECO:0000303" key="4">
    <source>
    </source>
</evidence>
<evidence type="ECO:0000305" key="5"/>
<evidence type="ECO:0000312" key="6">
    <source>
        <dbReference type="EMBL" id="EDQ79421.1"/>
    </source>
</evidence>
<evidence type="ECO:0000312" key="7">
    <source>
        <dbReference type="EMBL" id="PNR35094.1"/>
    </source>
</evidence>
<protein>
    <recommendedName>
        <fullName evidence="4">Protein SOSEKI 4</fullName>
        <shortName evidence="4">PpSOK4</shortName>
    </recommendedName>
</protein>
<organism>
    <name type="scientific">Physcomitrium patens</name>
    <name type="common">Spreading-leaved earth moss</name>
    <name type="synonym">Physcomitrella patens</name>
    <dbReference type="NCBI Taxonomy" id="3218"/>
    <lineage>
        <taxon>Eukaryota</taxon>
        <taxon>Viridiplantae</taxon>
        <taxon>Streptophyta</taxon>
        <taxon>Embryophyta</taxon>
        <taxon>Bryophyta</taxon>
        <taxon>Bryophytina</taxon>
        <taxon>Bryopsida</taxon>
        <taxon>Funariidae</taxon>
        <taxon>Funariales</taxon>
        <taxon>Funariaceae</taxon>
        <taxon>Physcomitrium</taxon>
    </lineage>
</organism>
<sequence length="390" mass="44293">MPSLRTERRSFGMETPRHSSFRMAEVLYVLSCGGQLEHPHMINVQYPVHQPGPTLRDVKTRLIALRGRGMPDSFSWSYKRNYKDTFIWCDLFDDNFILPLSESGEYALKATKRFDASQVKYLRPPRRSENLEAEGDVSMVVKKGLVLISDTGSVTSNRTMELNKQLMNSLSHSRSAAAVRNNEHSDVSSSDTHYSYEDVIERKDYPARCKSNSGATKRGKASVTPKQCHPSSRPAYWEFSPQGNRTGREDSLMTIGLTKHVVEENEGPTTPRAPARRRTWKKEIDKITIFRESNNSESSDDEQPSVQAETHVSKLSKSGGSYSAAPEDLFLYILRKATRLGSFKPRVCTEVDVVDSTQSKTKMLFRSKTKDEVNRLLYHSPLKQDQSIKK</sequence>
<dbReference type="EMBL" id="DS544908">
    <property type="protein sequence ID" value="EDQ79421.1"/>
    <property type="molecule type" value="Genomic_DNA"/>
</dbReference>
<dbReference type="EMBL" id="ABEU02000018">
    <property type="protein sequence ID" value="PNR35094.1"/>
    <property type="molecule type" value="Genomic_DNA"/>
</dbReference>
<dbReference type="RefSeq" id="NP_001413524.1">
    <property type="nucleotide sequence ID" value="NM_001426595.1"/>
</dbReference>
<dbReference type="RefSeq" id="XP_001755748.1">
    <property type="nucleotide sequence ID" value="XM_001755696.1"/>
</dbReference>
<dbReference type="SMR" id="A9RNY0"/>
<dbReference type="FunCoup" id="A9RNY0">
    <property type="interactions" value="1674"/>
</dbReference>
<dbReference type="PaxDb" id="3218-PP1S19_321V6.1"/>
<dbReference type="EnsemblPlants" id="Pp3c18_11140V3.1">
    <property type="protein sequence ID" value="Pp3c18_11140V3.1"/>
    <property type="gene ID" value="Pp3c18_11140"/>
</dbReference>
<dbReference type="EnsemblPlants" id="Pp3c18_11140V3.2">
    <property type="protein sequence ID" value="Pp3c18_11140V3.2"/>
    <property type="gene ID" value="Pp3c18_11140"/>
</dbReference>
<dbReference type="EnsemblPlants" id="Pp3c18_11140V3.3">
    <property type="protein sequence ID" value="Pp3c18_11140V3.3"/>
    <property type="gene ID" value="Pp3c18_11140"/>
</dbReference>
<dbReference type="GeneID" id="112295348"/>
<dbReference type="Gramene" id="Pp3c18_11140V3.1">
    <property type="protein sequence ID" value="Pp3c18_11140V3.1"/>
    <property type="gene ID" value="Pp3c18_11140"/>
</dbReference>
<dbReference type="Gramene" id="Pp3c18_11140V3.2">
    <property type="protein sequence ID" value="Pp3c18_11140V3.2"/>
    <property type="gene ID" value="Pp3c18_11140"/>
</dbReference>
<dbReference type="Gramene" id="Pp3c18_11140V3.3">
    <property type="protein sequence ID" value="Pp3c18_11140V3.3"/>
    <property type="gene ID" value="Pp3c18_11140"/>
</dbReference>
<dbReference type="eggNOG" id="ENOG502QVHU">
    <property type="taxonomic scope" value="Eukaryota"/>
</dbReference>
<dbReference type="HOGENOM" id="CLU_708616_0_0_1"/>
<dbReference type="InParanoid" id="A9RNY0"/>
<dbReference type="Proteomes" id="UP000006727">
    <property type="component" value="Chromosome 18"/>
</dbReference>
<dbReference type="GO" id="GO:0005886">
    <property type="term" value="C:plasma membrane"/>
    <property type="evidence" value="ECO:0007669"/>
    <property type="project" value="UniProtKB-SubCell"/>
</dbReference>
<dbReference type="GO" id="GO:0042803">
    <property type="term" value="F:protein homodimerization activity"/>
    <property type="evidence" value="ECO:0000250"/>
    <property type="project" value="UniProtKB"/>
</dbReference>
<dbReference type="GO" id="GO:0051301">
    <property type="term" value="P:cell division"/>
    <property type="evidence" value="ECO:0007669"/>
    <property type="project" value="UniProtKB-KW"/>
</dbReference>
<dbReference type="GO" id="GO:1905392">
    <property type="term" value="P:plant organ morphogenesis"/>
    <property type="evidence" value="ECO:0000250"/>
    <property type="project" value="UniProtKB"/>
</dbReference>
<dbReference type="GO" id="GO:0051258">
    <property type="term" value="P:protein polymerization"/>
    <property type="evidence" value="ECO:0000314"/>
    <property type="project" value="UniProtKB"/>
</dbReference>
<dbReference type="GO" id="GO:0051302">
    <property type="term" value="P:regulation of cell division"/>
    <property type="evidence" value="ECO:0000250"/>
    <property type="project" value="UniProtKB"/>
</dbReference>
<dbReference type="GO" id="GO:0090708">
    <property type="term" value="P:specification of plant organ axis polarity"/>
    <property type="evidence" value="ECO:0000250"/>
    <property type="project" value="UniProtKB"/>
</dbReference>
<dbReference type="InterPro" id="IPR010369">
    <property type="entry name" value="SOK"/>
</dbReference>
<dbReference type="InterPro" id="IPR048351">
    <property type="entry name" value="SOK_DIX"/>
</dbReference>
<dbReference type="PANTHER" id="PTHR31083:SF6">
    <property type="entry name" value="PROTEIN SOSEKI 3"/>
    <property type="match status" value="1"/>
</dbReference>
<dbReference type="PANTHER" id="PTHR31083">
    <property type="entry name" value="UPSTREAM OF FLC PROTEIN (DUF966)"/>
    <property type="match status" value="1"/>
</dbReference>
<dbReference type="Pfam" id="PF06136">
    <property type="entry name" value="SOK"/>
    <property type="match status" value="1"/>
</dbReference>
<accession>A9RNY0</accession>
<proteinExistence type="evidence at protein level"/>